<protein>
    <recommendedName>
        <fullName evidence="1">GTPase Era</fullName>
    </recommendedName>
</protein>
<evidence type="ECO:0000255" key="1">
    <source>
        <dbReference type="HAMAP-Rule" id="MF_00367"/>
    </source>
</evidence>
<evidence type="ECO:0000255" key="2">
    <source>
        <dbReference type="PROSITE-ProRule" id="PRU01050"/>
    </source>
</evidence>
<evidence type="ECO:0000305" key="3"/>
<comment type="function">
    <text evidence="1">An essential GTPase that binds both GDP and GTP, with rapid nucleotide exchange. Plays a role in 16S rRNA processing and 30S ribosomal subunit biogenesis and possibly also in cell cycle regulation and energy metabolism.</text>
</comment>
<comment type="subunit">
    <text evidence="1">Monomer.</text>
</comment>
<comment type="subcellular location">
    <subcellularLocation>
        <location>Cytoplasm</location>
    </subcellularLocation>
    <subcellularLocation>
        <location evidence="1">Cell membrane</location>
        <topology evidence="1">Peripheral membrane protein</topology>
    </subcellularLocation>
</comment>
<comment type="similarity">
    <text evidence="1 2">Belongs to the TRAFAC class TrmE-Era-EngA-EngB-Septin-like GTPase superfamily. Era GTPase family.</text>
</comment>
<comment type="sequence caution" evidence="3">
    <conflict type="erroneous initiation">
        <sequence resource="EMBL-CDS" id="ABD30743"/>
    </conflict>
    <text>Truncated N-terminus.</text>
</comment>
<proteinExistence type="evidence at protein level"/>
<reference key="1">
    <citation type="book" date="2006" name="Gram positive pathogens, 2nd edition">
        <title>The Staphylococcus aureus NCTC 8325 genome.</title>
        <editorList>
            <person name="Fischetti V."/>
            <person name="Novick R."/>
            <person name="Ferretti J."/>
            <person name="Portnoy D."/>
            <person name="Rood J."/>
        </editorList>
        <authorList>
            <person name="Gillaspy A.F."/>
            <person name="Worrell V."/>
            <person name="Orvis J."/>
            <person name="Roe B.A."/>
            <person name="Dyer D.W."/>
            <person name="Iandolo J.J."/>
        </authorList>
    </citation>
    <scope>NUCLEOTIDE SEQUENCE [LARGE SCALE GENOMIC DNA]</scope>
    <source>
        <strain>NCTC 8325 / PS 47</strain>
    </source>
</reference>
<accession>Q2FY06</accession>
<dbReference type="EMBL" id="CP000253">
    <property type="protein sequence ID" value="ABD30743.1"/>
    <property type="status" value="ALT_INIT"/>
    <property type="molecule type" value="Genomic_DNA"/>
</dbReference>
<dbReference type="RefSeq" id="WP_000134766.1">
    <property type="nucleotide sequence ID" value="NZ_LS483365.1"/>
</dbReference>
<dbReference type="RefSeq" id="YP_500179.2">
    <property type="nucleotide sequence ID" value="NC_007795.1"/>
</dbReference>
<dbReference type="PDB" id="9JKP">
    <property type="method" value="X-ray"/>
    <property type="resolution" value="2.76 A"/>
    <property type="chains" value="B=2-299"/>
</dbReference>
<dbReference type="PDBsum" id="9JKP"/>
<dbReference type="SMR" id="Q2FY06"/>
<dbReference type="STRING" id="93061.SAOUHSC_01668"/>
<dbReference type="PaxDb" id="1280-SAXN108_1589"/>
<dbReference type="GeneID" id="3920080"/>
<dbReference type="KEGG" id="sao:SAOUHSC_01668"/>
<dbReference type="PATRIC" id="fig|93061.5.peg.1518"/>
<dbReference type="eggNOG" id="COG1159">
    <property type="taxonomic scope" value="Bacteria"/>
</dbReference>
<dbReference type="HOGENOM" id="CLU_038009_1_2_9"/>
<dbReference type="OrthoDB" id="9805918at2"/>
<dbReference type="PRO" id="PR:Q2FY06"/>
<dbReference type="Proteomes" id="UP000008816">
    <property type="component" value="Chromosome"/>
</dbReference>
<dbReference type="GO" id="GO:0005829">
    <property type="term" value="C:cytosol"/>
    <property type="evidence" value="ECO:0000318"/>
    <property type="project" value="GO_Central"/>
</dbReference>
<dbReference type="GO" id="GO:0005886">
    <property type="term" value="C:plasma membrane"/>
    <property type="evidence" value="ECO:0007669"/>
    <property type="project" value="UniProtKB-SubCell"/>
</dbReference>
<dbReference type="GO" id="GO:0005525">
    <property type="term" value="F:GTP binding"/>
    <property type="evidence" value="ECO:0007669"/>
    <property type="project" value="UniProtKB-UniRule"/>
</dbReference>
<dbReference type="GO" id="GO:0003924">
    <property type="term" value="F:GTPase activity"/>
    <property type="evidence" value="ECO:0007669"/>
    <property type="project" value="UniProtKB-UniRule"/>
</dbReference>
<dbReference type="GO" id="GO:0043024">
    <property type="term" value="F:ribosomal small subunit binding"/>
    <property type="evidence" value="ECO:0000318"/>
    <property type="project" value="GO_Central"/>
</dbReference>
<dbReference type="GO" id="GO:0019843">
    <property type="term" value="F:rRNA binding"/>
    <property type="evidence" value="ECO:0000318"/>
    <property type="project" value="GO_Central"/>
</dbReference>
<dbReference type="GO" id="GO:0070181">
    <property type="term" value="F:small ribosomal subunit rRNA binding"/>
    <property type="evidence" value="ECO:0007669"/>
    <property type="project" value="UniProtKB-UniRule"/>
</dbReference>
<dbReference type="GO" id="GO:0000028">
    <property type="term" value="P:ribosomal small subunit assembly"/>
    <property type="evidence" value="ECO:0000318"/>
    <property type="project" value="GO_Central"/>
</dbReference>
<dbReference type="CDD" id="cd04163">
    <property type="entry name" value="Era"/>
    <property type="match status" value="1"/>
</dbReference>
<dbReference type="CDD" id="cd22534">
    <property type="entry name" value="KH-II_Era"/>
    <property type="match status" value="1"/>
</dbReference>
<dbReference type="FunFam" id="3.30.300.20:FF:000003">
    <property type="entry name" value="GTPase Era"/>
    <property type="match status" value="1"/>
</dbReference>
<dbReference type="FunFam" id="3.40.50.300:FF:000094">
    <property type="entry name" value="GTPase Era"/>
    <property type="match status" value="1"/>
</dbReference>
<dbReference type="Gene3D" id="3.30.300.20">
    <property type="match status" value="1"/>
</dbReference>
<dbReference type="Gene3D" id="3.40.50.300">
    <property type="entry name" value="P-loop containing nucleotide triphosphate hydrolases"/>
    <property type="match status" value="1"/>
</dbReference>
<dbReference type="HAMAP" id="MF_00367">
    <property type="entry name" value="GTPase_Era"/>
    <property type="match status" value="1"/>
</dbReference>
<dbReference type="InterPro" id="IPR030388">
    <property type="entry name" value="G_ERA_dom"/>
</dbReference>
<dbReference type="InterPro" id="IPR006073">
    <property type="entry name" value="GTP-bd"/>
</dbReference>
<dbReference type="InterPro" id="IPR005662">
    <property type="entry name" value="GTPase_Era-like"/>
</dbReference>
<dbReference type="InterPro" id="IPR015946">
    <property type="entry name" value="KH_dom-like_a/b"/>
</dbReference>
<dbReference type="InterPro" id="IPR004044">
    <property type="entry name" value="KH_dom_type_2"/>
</dbReference>
<dbReference type="InterPro" id="IPR009019">
    <property type="entry name" value="KH_sf_prok-type"/>
</dbReference>
<dbReference type="InterPro" id="IPR027417">
    <property type="entry name" value="P-loop_NTPase"/>
</dbReference>
<dbReference type="InterPro" id="IPR005225">
    <property type="entry name" value="Small_GTP-bd"/>
</dbReference>
<dbReference type="NCBIfam" id="TIGR00436">
    <property type="entry name" value="era"/>
    <property type="match status" value="1"/>
</dbReference>
<dbReference type="NCBIfam" id="NF000908">
    <property type="entry name" value="PRK00089.1"/>
    <property type="match status" value="1"/>
</dbReference>
<dbReference type="NCBIfam" id="TIGR00231">
    <property type="entry name" value="small_GTP"/>
    <property type="match status" value="1"/>
</dbReference>
<dbReference type="PANTHER" id="PTHR42698">
    <property type="entry name" value="GTPASE ERA"/>
    <property type="match status" value="1"/>
</dbReference>
<dbReference type="PANTHER" id="PTHR42698:SF1">
    <property type="entry name" value="GTPASE ERA, MITOCHONDRIAL"/>
    <property type="match status" value="1"/>
</dbReference>
<dbReference type="Pfam" id="PF07650">
    <property type="entry name" value="KH_2"/>
    <property type="match status" value="1"/>
</dbReference>
<dbReference type="Pfam" id="PF01926">
    <property type="entry name" value="MMR_HSR1"/>
    <property type="match status" value="1"/>
</dbReference>
<dbReference type="SUPFAM" id="SSF52540">
    <property type="entry name" value="P-loop containing nucleoside triphosphate hydrolases"/>
    <property type="match status" value="1"/>
</dbReference>
<dbReference type="SUPFAM" id="SSF54814">
    <property type="entry name" value="Prokaryotic type KH domain (KH-domain type II)"/>
    <property type="match status" value="1"/>
</dbReference>
<dbReference type="PROSITE" id="PS51713">
    <property type="entry name" value="G_ERA"/>
    <property type="match status" value="1"/>
</dbReference>
<dbReference type="PROSITE" id="PS50823">
    <property type="entry name" value="KH_TYPE_2"/>
    <property type="match status" value="1"/>
</dbReference>
<sequence>MTEHKSGFVSIIGRPNVGKSTFVNRVIGHKIAIMSDKAQTTRNKIQGVMTRDDAQIIFIDTPGIHKPKHKLGDYMMKVAKNTLSEIDAIMFMVNANEEIGRGDEYIIEMLKNVKTPVFLVLNKIDLVHPDELMPKIEEYQSYMDFTEIVPISALEGLNVDHFIDVLKTYLPEGPKYYPDDQISDHPEQFVVGEIIREKILHLTSEEIPHAIGVNVDRMVKESEDRVHIEATIYVERGSQKGIVIGKGGKKLKEVGKRARRDIEMLLGSKVYLELWVKVQRDWRNKVNFIRQIGYVEDQD</sequence>
<name>ERA_STAA8</name>
<feature type="chain" id="PRO_0000403970" description="GTPase Era">
    <location>
        <begin position="1"/>
        <end position="299"/>
    </location>
</feature>
<feature type="domain" description="Era-type G" evidence="2">
    <location>
        <begin position="5"/>
        <end position="172"/>
    </location>
</feature>
<feature type="domain" description="KH type-2" evidence="1">
    <location>
        <begin position="203"/>
        <end position="280"/>
    </location>
</feature>
<feature type="region of interest" description="G1" evidence="2">
    <location>
        <begin position="13"/>
        <end position="20"/>
    </location>
</feature>
<feature type="region of interest" description="G2" evidence="2">
    <location>
        <begin position="39"/>
        <end position="43"/>
    </location>
</feature>
<feature type="region of interest" description="G3" evidence="2">
    <location>
        <begin position="60"/>
        <end position="63"/>
    </location>
</feature>
<feature type="region of interest" description="G4" evidence="2">
    <location>
        <begin position="122"/>
        <end position="125"/>
    </location>
</feature>
<feature type="region of interest" description="G5" evidence="2">
    <location>
        <begin position="151"/>
        <end position="153"/>
    </location>
</feature>
<feature type="binding site" evidence="1">
    <location>
        <begin position="13"/>
        <end position="20"/>
    </location>
    <ligand>
        <name>GTP</name>
        <dbReference type="ChEBI" id="CHEBI:37565"/>
    </ligand>
</feature>
<feature type="binding site" evidence="1">
    <location>
        <begin position="60"/>
        <end position="64"/>
    </location>
    <ligand>
        <name>GTP</name>
        <dbReference type="ChEBI" id="CHEBI:37565"/>
    </ligand>
</feature>
<feature type="binding site" evidence="1">
    <location>
        <begin position="122"/>
        <end position="125"/>
    </location>
    <ligand>
        <name>GTP</name>
        <dbReference type="ChEBI" id="CHEBI:37565"/>
    </ligand>
</feature>
<organism>
    <name type="scientific">Staphylococcus aureus (strain NCTC 8325 / PS 47)</name>
    <dbReference type="NCBI Taxonomy" id="93061"/>
    <lineage>
        <taxon>Bacteria</taxon>
        <taxon>Bacillati</taxon>
        <taxon>Bacillota</taxon>
        <taxon>Bacilli</taxon>
        <taxon>Bacillales</taxon>
        <taxon>Staphylococcaceae</taxon>
        <taxon>Staphylococcus</taxon>
    </lineage>
</organism>
<keyword id="KW-0002">3D-structure</keyword>
<keyword id="KW-1003">Cell membrane</keyword>
<keyword id="KW-0963">Cytoplasm</keyword>
<keyword id="KW-0342">GTP-binding</keyword>
<keyword id="KW-0472">Membrane</keyword>
<keyword id="KW-0547">Nucleotide-binding</keyword>
<keyword id="KW-1185">Reference proteome</keyword>
<keyword id="KW-0690">Ribosome biogenesis</keyword>
<keyword id="KW-0694">RNA-binding</keyword>
<keyword id="KW-0699">rRNA-binding</keyword>
<gene>
    <name evidence="1" type="primary">era</name>
    <name type="ordered locus">SAOUHSC_01668</name>
</gene>